<reference key="1">
    <citation type="journal article" date="2005" name="Infect. Immun.">
        <title>Whole-genome analyses of speciation events in pathogenic Brucellae.</title>
        <authorList>
            <person name="Chain P.S."/>
            <person name="Comerci D.J."/>
            <person name="Tolmasky M.E."/>
            <person name="Larimer F.W."/>
            <person name="Malfatti S.A."/>
            <person name="Vergez L.M."/>
            <person name="Aguero F."/>
            <person name="Land M.L."/>
            <person name="Ugalde R.A."/>
            <person name="Garcia E."/>
        </authorList>
    </citation>
    <scope>NUCLEOTIDE SEQUENCE [LARGE SCALE GENOMIC DNA]</scope>
    <source>
        <strain>2308</strain>
    </source>
</reference>
<keyword id="KW-0067">ATP-binding</keyword>
<keyword id="KW-0547">Nucleotide-binding</keyword>
<keyword id="KW-0548">Nucleotidyltransferase</keyword>
<keyword id="KW-1185">Reference proteome</keyword>
<keyword id="KW-0808">Transferase</keyword>
<name>CYSD_BRUA2</name>
<dbReference type="EC" id="2.7.7.4" evidence="1"/>
<dbReference type="EMBL" id="AM040264">
    <property type="protein sequence ID" value="CAJ10149.1"/>
    <property type="molecule type" value="Genomic_DNA"/>
</dbReference>
<dbReference type="SMR" id="Q2YP46"/>
<dbReference type="STRING" id="359391.BAB1_0193"/>
<dbReference type="KEGG" id="bmf:BAB1_0193"/>
<dbReference type="PATRIC" id="fig|359391.11.peg.1617"/>
<dbReference type="HOGENOM" id="CLU_043026_0_0_5"/>
<dbReference type="UniPathway" id="UPA00140">
    <property type="reaction ID" value="UER00204"/>
</dbReference>
<dbReference type="Proteomes" id="UP000002719">
    <property type="component" value="Chromosome I"/>
</dbReference>
<dbReference type="GO" id="GO:0005524">
    <property type="term" value="F:ATP binding"/>
    <property type="evidence" value="ECO:0007669"/>
    <property type="project" value="UniProtKB-KW"/>
</dbReference>
<dbReference type="GO" id="GO:0004781">
    <property type="term" value="F:sulfate adenylyltransferase (ATP) activity"/>
    <property type="evidence" value="ECO:0007669"/>
    <property type="project" value="UniProtKB-UniRule"/>
</dbReference>
<dbReference type="GO" id="GO:0070814">
    <property type="term" value="P:hydrogen sulfide biosynthetic process"/>
    <property type="evidence" value="ECO:0007669"/>
    <property type="project" value="UniProtKB-UniRule"/>
</dbReference>
<dbReference type="GO" id="GO:0000103">
    <property type="term" value="P:sulfate assimilation"/>
    <property type="evidence" value="ECO:0007669"/>
    <property type="project" value="UniProtKB-UniRule"/>
</dbReference>
<dbReference type="CDD" id="cd23946">
    <property type="entry name" value="Sulfate_adenylyltransferase_2"/>
    <property type="match status" value="1"/>
</dbReference>
<dbReference type="FunFam" id="3.40.50.620:FF:000002">
    <property type="entry name" value="Sulfate adenylyltransferase subunit 2"/>
    <property type="match status" value="1"/>
</dbReference>
<dbReference type="Gene3D" id="3.40.50.620">
    <property type="entry name" value="HUPs"/>
    <property type="match status" value="1"/>
</dbReference>
<dbReference type="HAMAP" id="MF_00064">
    <property type="entry name" value="Sulf_adenylyltr_sub2"/>
    <property type="match status" value="1"/>
</dbReference>
<dbReference type="InterPro" id="IPR002500">
    <property type="entry name" value="PAPS_reduct_dom"/>
</dbReference>
<dbReference type="InterPro" id="IPR014729">
    <property type="entry name" value="Rossmann-like_a/b/a_fold"/>
</dbReference>
<dbReference type="InterPro" id="IPR011784">
    <property type="entry name" value="SO4_adenylTrfase_ssu"/>
</dbReference>
<dbReference type="InterPro" id="IPR050128">
    <property type="entry name" value="Sulfate_adenylyltrnsfr_sub2"/>
</dbReference>
<dbReference type="NCBIfam" id="TIGR02039">
    <property type="entry name" value="CysD"/>
    <property type="match status" value="1"/>
</dbReference>
<dbReference type="NCBIfam" id="NF003587">
    <property type="entry name" value="PRK05253.1"/>
    <property type="match status" value="1"/>
</dbReference>
<dbReference type="NCBIfam" id="NF009214">
    <property type="entry name" value="PRK12563.1"/>
    <property type="match status" value="1"/>
</dbReference>
<dbReference type="PANTHER" id="PTHR43196">
    <property type="entry name" value="SULFATE ADENYLYLTRANSFERASE SUBUNIT 2"/>
    <property type="match status" value="1"/>
</dbReference>
<dbReference type="PANTHER" id="PTHR43196:SF1">
    <property type="entry name" value="SULFATE ADENYLYLTRANSFERASE SUBUNIT 2"/>
    <property type="match status" value="1"/>
</dbReference>
<dbReference type="Pfam" id="PF01507">
    <property type="entry name" value="PAPS_reduct"/>
    <property type="match status" value="1"/>
</dbReference>
<dbReference type="PIRSF" id="PIRSF002936">
    <property type="entry name" value="CysDAde_trans"/>
    <property type="match status" value="1"/>
</dbReference>
<dbReference type="SUPFAM" id="SSF52402">
    <property type="entry name" value="Adenine nucleotide alpha hydrolases-like"/>
    <property type="match status" value="1"/>
</dbReference>
<feature type="chain" id="PRO_0000340183" description="Sulfate adenylyltransferase subunit 2">
    <location>
        <begin position="1"/>
        <end position="300"/>
    </location>
</feature>
<feature type="region of interest" description="Disordered" evidence="2">
    <location>
        <begin position="281"/>
        <end position="300"/>
    </location>
</feature>
<comment type="function">
    <text evidence="1">With CysN forms the ATP sulfurylase (ATPS) that catalyzes the adenylation of sulfate producing adenosine 5'-phosphosulfate (APS) and diphosphate, the first enzymatic step in sulfur assimilation pathway. APS synthesis involves the formation of a high-energy phosphoric-sulfuric acid anhydride bond driven by GTP hydrolysis by CysN coupled to ATP hydrolysis by CysD.</text>
</comment>
<comment type="catalytic activity">
    <reaction evidence="1">
        <text>sulfate + ATP + H(+) = adenosine 5'-phosphosulfate + diphosphate</text>
        <dbReference type="Rhea" id="RHEA:18133"/>
        <dbReference type="ChEBI" id="CHEBI:15378"/>
        <dbReference type="ChEBI" id="CHEBI:16189"/>
        <dbReference type="ChEBI" id="CHEBI:30616"/>
        <dbReference type="ChEBI" id="CHEBI:33019"/>
        <dbReference type="ChEBI" id="CHEBI:58243"/>
        <dbReference type="EC" id="2.7.7.4"/>
    </reaction>
</comment>
<comment type="pathway">
    <text evidence="1">Sulfur metabolism; hydrogen sulfide biosynthesis; sulfite from sulfate: step 1/3.</text>
</comment>
<comment type="subunit">
    <text evidence="1">Heterodimer composed of CysD, the smaller subunit, and CysN.</text>
</comment>
<comment type="similarity">
    <text evidence="1">Belongs to the PAPS reductase family. CysD subfamily.</text>
</comment>
<proteinExistence type="inferred from homology"/>
<protein>
    <recommendedName>
        <fullName evidence="1">Sulfate adenylyltransferase subunit 2</fullName>
        <ecNumber evidence="1">2.7.7.4</ecNumber>
    </recommendedName>
    <alternativeName>
        <fullName evidence="1">ATP-sulfurylase small subunit</fullName>
    </alternativeName>
    <alternativeName>
        <fullName evidence="1">Sulfate adenylate transferase</fullName>
        <shortName evidence="1">SAT</shortName>
    </alternativeName>
</protein>
<evidence type="ECO:0000255" key="1">
    <source>
        <dbReference type="HAMAP-Rule" id="MF_00064"/>
    </source>
</evidence>
<evidence type="ECO:0000256" key="2">
    <source>
        <dbReference type="SAM" id="MobiDB-lite"/>
    </source>
</evidence>
<organism>
    <name type="scientific">Brucella abortus (strain 2308)</name>
    <dbReference type="NCBI Taxonomy" id="359391"/>
    <lineage>
        <taxon>Bacteria</taxon>
        <taxon>Pseudomonadati</taxon>
        <taxon>Pseudomonadota</taxon>
        <taxon>Alphaproteobacteria</taxon>
        <taxon>Hyphomicrobiales</taxon>
        <taxon>Brucellaceae</taxon>
        <taxon>Brucella/Ochrobactrum group</taxon>
        <taxon>Brucella</taxon>
    </lineage>
</organism>
<accession>Q2YP46</accession>
<sequence length="300" mass="34738">MKNLTHLQRLEAEAIYVFREVAATFSNPVMLYSVGKDSSVMLHLAMKAFYPAPPPFPFLHVDTTWKFREMIEFRDAQAREKGFELLVHVNEQGVRDGIGPFTHGSNVHTHIMKTVGLRQALDKYRFDAAFGGARRDEEKSRAKERIFSFRNAQHGWDPKNQRPEMWKIYNTRVSKGESIRVFPLSNWTELDIWQYILQENIPIVPLYFAARRPVVERDGMLIMVDDDRMKLRPGEPVENRLVRFRTLGCYPLTGAIPSSAANLSDIVEEMLIARTSERQGRAIDRDEAGSMEKKKREGYF</sequence>
<gene>
    <name evidence="1" type="primary">cysD</name>
    <name type="ordered locus">BAB1_0193</name>
</gene>